<reference key="1">
    <citation type="journal article" date="2006" name="Nature">
        <title>DNA sequence of human chromosome 17 and analysis of rearrangement in the human lineage.</title>
        <authorList>
            <person name="Zody M.C."/>
            <person name="Garber M."/>
            <person name="Adams D.J."/>
            <person name="Sharpe T."/>
            <person name="Harrow J."/>
            <person name="Lupski J.R."/>
            <person name="Nicholson C."/>
            <person name="Searle S.M."/>
            <person name="Wilming L."/>
            <person name="Young S.K."/>
            <person name="Abouelleil A."/>
            <person name="Allen N.R."/>
            <person name="Bi W."/>
            <person name="Bloom T."/>
            <person name="Borowsky M.L."/>
            <person name="Bugalter B.E."/>
            <person name="Butler J."/>
            <person name="Chang J.L."/>
            <person name="Chen C.-K."/>
            <person name="Cook A."/>
            <person name="Corum B."/>
            <person name="Cuomo C.A."/>
            <person name="de Jong P.J."/>
            <person name="DeCaprio D."/>
            <person name="Dewar K."/>
            <person name="FitzGerald M."/>
            <person name="Gilbert J."/>
            <person name="Gibson R."/>
            <person name="Gnerre S."/>
            <person name="Goldstein S."/>
            <person name="Grafham D.V."/>
            <person name="Grocock R."/>
            <person name="Hafez N."/>
            <person name="Hagopian D.S."/>
            <person name="Hart E."/>
            <person name="Norman C.H."/>
            <person name="Humphray S."/>
            <person name="Jaffe D.B."/>
            <person name="Jones M."/>
            <person name="Kamal M."/>
            <person name="Khodiyar V.K."/>
            <person name="LaButti K."/>
            <person name="Laird G."/>
            <person name="Lehoczky J."/>
            <person name="Liu X."/>
            <person name="Lokyitsang T."/>
            <person name="Loveland J."/>
            <person name="Lui A."/>
            <person name="Macdonald P."/>
            <person name="Major J.E."/>
            <person name="Matthews L."/>
            <person name="Mauceli E."/>
            <person name="McCarroll S.A."/>
            <person name="Mihalev A.H."/>
            <person name="Mudge J."/>
            <person name="Nguyen C."/>
            <person name="Nicol R."/>
            <person name="O'Leary S.B."/>
            <person name="Osoegawa K."/>
            <person name="Schwartz D.C."/>
            <person name="Shaw-Smith C."/>
            <person name="Stankiewicz P."/>
            <person name="Steward C."/>
            <person name="Swarbreck D."/>
            <person name="Venkataraman V."/>
            <person name="Whittaker C.A."/>
            <person name="Yang X."/>
            <person name="Zimmer A.R."/>
            <person name="Bradley A."/>
            <person name="Hubbard T."/>
            <person name="Birren B.W."/>
            <person name="Rogers J."/>
            <person name="Lander E.S."/>
            <person name="Nusbaum C."/>
        </authorList>
    </citation>
    <scope>NUCLEOTIDE SEQUENCE [LARGE SCALE GENOMIC DNA]</scope>
</reference>
<dbReference type="EMBL" id="AC006070">
    <property type="status" value="NOT_ANNOTATED_CDS"/>
    <property type="molecule type" value="Genomic_DNA"/>
</dbReference>
<dbReference type="CCDS" id="CCDS59286.1"/>
<dbReference type="RefSeq" id="NP_001264260.1">
    <property type="nucleotide sequence ID" value="NM_001277331.1"/>
</dbReference>
<dbReference type="FunCoup" id="A8MVA2">
    <property type="interactions" value="8"/>
</dbReference>
<dbReference type="STRING" id="9606.ENSP00000375150"/>
<dbReference type="BioMuta" id="KRTAP9-6"/>
<dbReference type="MassIVE" id="A8MVA2"/>
<dbReference type="PaxDb" id="9606-ENSP00000375150"/>
<dbReference type="PeptideAtlas" id="A8MVA2"/>
<dbReference type="DNASU" id="100507608"/>
<dbReference type="Ensembl" id="ENST00000391355.2">
    <property type="protein sequence ID" value="ENSP00000375150.1"/>
    <property type="gene ID" value="ENSG00000212659.2"/>
</dbReference>
<dbReference type="Ensembl" id="ENST00000576511.1">
    <property type="protein sequence ID" value="ENSP00000460691.1"/>
    <property type="gene ID" value="ENSG00000263263.1"/>
</dbReference>
<dbReference type="GeneID" id="100507608"/>
<dbReference type="KEGG" id="hsa:100507608"/>
<dbReference type="MANE-Select" id="ENST00000391355.2">
    <property type="protein sequence ID" value="ENSP00000375150.1"/>
    <property type="RefSeq nucleotide sequence ID" value="NM_001277331.1"/>
    <property type="RefSeq protein sequence ID" value="NP_001264260.1"/>
</dbReference>
<dbReference type="UCSC" id="uc031rag.2">
    <property type="organism name" value="human"/>
</dbReference>
<dbReference type="AGR" id="HGNC:18914"/>
<dbReference type="CTD" id="100507608"/>
<dbReference type="GeneCards" id="KRTAP9-6"/>
<dbReference type="HGNC" id="HGNC:18914">
    <property type="gene designation" value="KRTAP9-6"/>
</dbReference>
<dbReference type="HPA" id="ENSG00000212659">
    <property type="expression patterns" value="Tissue enriched (skin)"/>
</dbReference>
<dbReference type="neXtProt" id="NX_A8MVA2"/>
<dbReference type="VEuPathDB" id="HostDB:ENSG00000212659"/>
<dbReference type="eggNOG" id="KOG4726">
    <property type="taxonomic scope" value="Eukaryota"/>
</dbReference>
<dbReference type="GeneTree" id="ENSGT00940000156135"/>
<dbReference type="HOGENOM" id="CLU_113141_2_0_1"/>
<dbReference type="InParanoid" id="A8MVA2"/>
<dbReference type="OMA" id="SCQYPSC"/>
<dbReference type="PAN-GO" id="A8MVA2">
    <property type="GO annotations" value="0 GO annotations based on evolutionary models"/>
</dbReference>
<dbReference type="TreeFam" id="TF351356"/>
<dbReference type="PathwayCommons" id="A8MVA2"/>
<dbReference type="Reactome" id="R-HSA-6805567">
    <property type="pathway name" value="Keratinization"/>
</dbReference>
<dbReference type="BioGRID-ORCS" id="100507608">
    <property type="hits" value="119 hits in 1048 CRISPR screens"/>
</dbReference>
<dbReference type="Pharos" id="A8MVA2">
    <property type="development level" value="Tdark"/>
</dbReference>
<dbReference type="PRO" id="PR:A8MVA2"/>
<dbReference type="Proteomes" id="UP000005640">
    <property type="component" value="Chromosome 17"/>
</dbReference>
<dbReference type="RNAct" id="A8MVA2">
    <property type="molecule type" value="protein"/>
</dbReference>
<dbReference type="Bgee" id="ENSG00000212659">
    <property type="expression patterns" value="Expressed in skin of abdomen and 2 other cell types or tissues"/>
</dbReference>
<dbReference type="GO" id="GO:0005829">
    <property type="term" value="C:cytosol"/>
    <property type="evidence" value="ECO:0000304"/>
    <property type="project" value="Reactome"/>
</dbReference>
<dbReference type="GO" id="GO:0045095">
    <property type="term" value="C:keratin filament"/>
    <property type="evidence" value="ECO:0007669"/>
    <property type="project" value="InterPro"/>
</dbReference>
<dbReference type="InterPro" id="IPR002494">
    <property type="entry name" value="KAP"/>
</dbReference>
<dbReference type="Pfam" id="PF13885">
    <property type="entry name" value="Keratin_B2_2"/>
    <property type="match status" value="2"/>
</dbReference>
<proteinExistence type="evidence at protein level"/>
<accession>A8MVA2</accession>
<sequence>MTHCCSPGCQPTCCRTTCCRTTCWQPTIVTTCSSTPCCQPSCCVSSCCQPYCHPTCCQNTCCRTTCCQPTCVTSCCQPSCCSTPCYQPICCGSSCCGQTSCGSSCGQSSSCAPVYCRRTCYHPTTVCLPGCLNQSCGSSCCQPCYCPACCVSSCCQHSCC</sequence>
<comment type="function">
    <text evidence="1">In the hair cortex, hair keratin intermediate filaments are embedded in an interfilamentous matrix, consisting of hair keratin-associated proteins (KRTAP), which are essential for the formation of a rigid and resistant hair shaft through their extensive disulfide bond cross-linking with abundant cysteine residues of hair keratins. The matrix proteins include the high-sulfur and high-glycine-tyrosine keratins (By similarity).</text>
</comment>
<comment type="subunit">
    <text evidence="1">Interacts with hair keratins.</text>
</comment>
<comment type="similarity">
    <text evidence="2">Belongs to the KRTAP type 9 family.</text>
</comment>
<protein>
    <recommendedName>
        <fullName evidence="2">Keratin-associated protein 9-6</fullName>
    </recommendedName>
    <alternativeName>
        <fullName evidence="3">Keratin-associated protein 9-like 2</fullName>
    </alternativeName>
</protein>
<organism>
    <name type="scientific">Homo sapiens</name>
    <name type="common">Human</name>
    <dbReference type="NCBI Taxonomy" id="9606"/>
    <lineage>
        <taxon>Eukaryota</taxon>
        <taxon>Metazoa</taxon>
        <taxon>Chordata</taxon>
        <taxon>Craniata</taxon>
        <taxon>Vertebrata</taxon>
        <taxon>Euteleostomi</taxon>
        <taxon>Mammalia</taxon>
        <taxon>Eutheria</taxon>
        <taxon>Euarchontoglires</taxon>
        <taxon>Primates</taxon>
        <taxon>Haplorrhini</taxon>
        <taxon>Catarrhini</taxon>
        <taxon>Hominidae</taxon>
        <taxon>Homo</taxon>
    </lineage>
</organism>
<name>KRA96_HUMAN</name>
<keyword id="KW-0416">Keratin</keyword>
<keyword id="KW-1267">Proteomics identification</keyword>
<keyword id="KW-1185">Reference proteome</keyword>
<keyword id="KW-0677">Repeat</keyword>
<gene>
    <name evidence="3" type="primary">KRTAP9-6</name>
    <name type="synonym">KAP9.6</name>
    <name type="synonym">KRTAP9.6</name>
    <name evidence="3" type="synonym">KRTAP9L2</name>
</gene>
<evidence type="ECO:0000250" key="1"/>
<evidence type="ECO:0000305" key="2"/>
<evidence type="ECO:0000312" key="3">
    <source>
        <dbReference type="HGNC" id="HGNC:18914"/>
    </source>
</evidence>
<feature type="chain" id="PRO_0000332260" description="Keratin-associated protein 9-6">
    <location>
        <begin position="1"/>
        <end position="160"/>
    </location>
</feature>
<feature type="repeat" description="1">
    <location>
        <begin position="4"/>
        <end position="8"/>
    </location>
</feature>
<feature type="repeat" description="2">
    <location>
        <begin position="13"/>
        <end position="17"/>
    </location>
</feature>
<feature type="repeat" description="3">
    <location>
        <begin position="18"/>
        <end position="22"/>
    </location>
</feature>
<feature type="repeat" description="4">
    <location>
        <begin position="37"/>
        <end position="41"/>
    </location>
</feature>
<feature type="repeat" description="5">
    <location>
        <begin position="42"/>
        <end position="46"/>
    </location>
</feature>
<feature type="repeat" description="6">
    <location>
        <begin position="47"/>
        <end position="51"/>
    </location>
</feature>
<feature type="repeat" description="7">
    <location>
        <begin position="56"/>
        <end position="60"/>
    </location>
</feature>
<feature type="repeat" description="8">
    <location>
        <begin position="61"/>
        <end position="65"/>
    </location>
</feature>
<feature type="repeat" description="9">
    <location>
        <begin position="66"/>
        <end position="70"/>
    </location>
</feature>
<feature type="repeat" description="10">
    <location>
        <begin position="75"/>
        <end position="79"/>
    </location>
</feature>
<feature type="repeat" description="11">
    <location>
        <begin position="80"/>
        <end position="84"/>
    </location>
</feature>
<feature type="repeat" description="12">
    <location>
        <begin position="90"/>
        <end position="94"/>
    </location>
</feature>
<feature type="repeat" description="13">
    <location>
        <begin position="95"/>
        <end position="99"/>
    </location>
</feature>
<feature type="repeat" description="14">
    <location>
        <begin position="140"/>
        <end position="144"/>
    </location>
</feature>
<feature type="repeat" description="15">
    <location>
        <begin position="149"/>
        <end position="153"/>
    </location>
</feature>
<feature type="repeat" description="16">
    <location>
        <begin position="154"/>
        <end position="158"/>
    </location>
</feature>
<feature type="region of interest" description="16 X 5 AA repeats of C-C-[GSVRQ]-[QTSPHN]-[TPSGYC]">
    <location>
        <begin position="4"/>
        <end position="158"/>
    </location>
</feature>
<feature type="sequence variant" id="VAR_042997" description="In dbSNP:rs12938692.">
    <original>Y</original>
    <variation>C</variation>
    <location>
        <position position="86"/>
    </location>
</feature>